<proteinExistence type="evidence at protein level"/>
<protein>
    <recommendedName>
        <fullName evidence="1">Glucose-6-phosphate 1-dehydrogenase</fullName>
        <shortName evidence="1">G6PD</shortName>
        <ecNumber evidence="1">1.1.1.49</ecNumber>
    </recommendedName>
    <alternativeName>
        <fullName>Vegetative protein 11</fullName>
        <shortName>VEG11</shortName>
    </alternativeName>
</protein>
<gene>
    <name evidence="1" type="primary">zwf</name>
    <name type="synonym">yqjJ</name>
    <name type="ordered locus">BSU23850</name>
</gene>
<reference key="1">
    <citation type="journal article" date="1996" name="Microbiology">
        <title>Systematic sequencing of the 283 kb 210 degrees-232 degrees region of the Bacillus subtilis genome containing the skin element and many sporulation genes.</title>
        <authorList>
            <person name="Mizuno M."/>
            <person name="Masuda S."/>
            <person name="Takemaru K."/>
            <person name="Hosono S."/>
            <person name="Sato T."/>
            <person name="Takeuchi M."/>
            <person name="Kobayashi Y."/>
        </authorList>
    </citation>
    <scope>NUCLEOTIDE SEQUENCE [GENOMIC DNA]</scope>
    <source>
        <strain>168 / JH642</strain>
    </source>
</reference>
<reference key="2">
    <citation type="journal article" date="1997" name="Nature">
        <title>The complete genome sequence of the Gram-positive bacterium Bacillus subtilis.</title>
        <authorList>
            <person name="Kunst F."/>
            <person name="Ogasawara N."/>
            <person name="Moszer I."/>
            <person name="Albertini A.M."/>
            <person name="Alloni G."/>
            <person name="Azevedo V."/>
            <person name="Bertero M.G."/>
            <person name="Bessieres P."/>
            <person name="Bolotin A."/>
            <person name="Borchert S."/>
            <person name="Borriss R."/>
            <person name="Boursier L."/>
            <person name="Brans A."/>
            <person name="Braun M."/>
            <person name="Brignell S.C."/>
            <person name="Bron S."/>
            <person name="Brouillet S."/>
            <person name="Bruschi C.V."/>
            <person name="Caldwell B."/>
            <person name="Capuano V."/>
            <person name="Carter N.M."/>
            <person name="Choi S.-K."/>
            <person name="Codani J.-J."/>
            <person name="Connerton I.F."/>
            <person name="Cummings N.J."/>
            <person name="Daniel R.A."/>
            <person name="Denizot F."/>
            <person name="Devine K.M."/>
            <person name="Duesterhoeft A."/>
            <person name="Ehrlich S.D."/>
            <person name="Emmerson P.T."/>
            <person name="Entian K.-D."/>
            <person name="Errington J."/>
            <person name="Fabret C."/>
            <person name="Ferrari E."/>
            <person name="Foulger D."/>
            <person name="Fritz C."/>
            <person name="Fujita M."/>
            <person name="Fujita Y."/>
            <person name="Fuma S."/>
            <person name="Galizzi A."/>
            <person name="Galleron N."/>
            <person name="Ghim S.-Y."/>
            <person name="Glaser P."/>
            <person name="Goffeau A."/>
            <person name="Golightly E.J."/>
            <person name="Grandi G."/>
            <person name="Guiseppi G."/>
            <person name="Guy B.J."/>
            <person name="Haga K."/>
            <person name="Haiech J."/>
            <person name="Harwood C.R."/>
            <person name="Henaut A."/>
            <person name="Hilbert H."/>
            <person name="Holsappel S."/>
            <person name="Hosono S."/>
            <person name="Hullo M.-F."/>
            <person name="Itaya M."/>
            <person name="Jones L.-M."/>
            <person name="Joris B."/>
            <person name="Karamata D."/>
            <person name="Kasahara Y."/>
            <person name="Klaerr-Blanchard M."/>
            <person name="Klein C."/>
            <person name="Kobayashi Y."/>
            <person name="Koetter P."/>
            <person name="Koningstein G."/>
            <person name="Krogh S."/>
            <person name="Kumano M."/>
            <person name="Kurita K."/>
            <person name="Lapidus A."/>
            <person name="Lardinois S."/>
            <person name="Lauber J."/>
            <person name="Lazarevic V."/>
            <person name="Lee S.-M."/>
            <person name="Levine A."/>
            <person name="Liu H."/>
            <person name="Masuda S."/>
            <person name="Mauel C."/>
            <person name="Medigue C."/>
            <person name="Medina N."/>
            <person name="Mellado R.P."/>
            <person name="Mizuno M."/>
            <person name="Moestl D."/>
            <person name="Nakai S."/>
            <person name="Noback M."/>
            <person name="Noone D."/>
            <person name="O'Reilly M."/>
            <person name="Ogawa K."/>
            <person name="Ogiwara A."/>
            <person name="Oudega B."/>
            <person name="Park S.-H."/>
            <person name="Parro V."/>
            <person name="Pohl T.M."/>
            <person name="Portetelle D."/>
            <person name="Porwollik S."/>
            <person name="Prescott A.M."/>
            <person name="Presecan E."/>
            <person name="Pujic P."/>
            <person name="Purnelle B."/>
            <person name="Rapoport G."/>
            <person name="Rey M."/>
            <person name="Reynolds S."/>
            <person name="Rieger M."/>
            <person name="Rivolta C."/>
            <person name="Rocha E."/>
            <person name="Roche B."/>
            <person name="Rose M."/>
            <person name="Sadaie Y."/>
            <person name="Sato T."/>
            <person name="Scanlan E."/>
            <person name="Schleich S."/>
            <person name="Schroeter R."/>
            <person name="Scoffone F."/>
            <person name="Sekiguchi J."/>
            <person name="Sekowska A."/>
            <person name="Seror S.J."/>
            <person name="Serror P."/>
            <person name="Shin B.-S."/>
            <person name="Soldo B."/>
            <person name="Sorokin A."/>
            <person name="Tacconi E."/>
            <person name="Takagi T."/>
            <person name="Takahashi H."/>
            <person name="Takemaru K."/>
            <person name="Takeuchi M."/>
            <person name="Tamakoshi A."/>
            <person name="Tanaka T."/>
            <person name="Terpstra P."/>
            <person name="Tognoni A."/>
            <person name="Tosato V."/>
            <person name="Uchiyama S."/>
            <person name="Vandenbol M."/>
            <person name="Vannier F."/>
            <person name="Vassarotti A."/>
            <person name="Viari A."/>
            <person name="Wambutt R."/>
            <person name="Wedler E."/>
            <person name="Wedler H."/>
            <person name="Weitzenegger T."/>
            <person name="Winters P."/>
            <person name="Wipat A."/>
            <person name="Yamamoto H."/>
            <person name="Yamane K."/>
            <person name="Yasumoto K."/>
            <person name="Yata K."/>
            <person name="Yoshida K."/>
            <person name="Yoshikawa H.-F."/>
            <person name="Zumstein E."/>
            <person name="Yoshikawa H."/>
            <person name="Danchin A."/>
        </authorList>
    </citation>
    <scope>NUCLEOTIDE SEQUENCE [LARGE SCALE GENOMIC DNA]</scope>
    <source>
        <strain>168</strain>
    </source>
</reference>
<reference key="3">
    <citation type="journal article" date="2009" name="Microbiology">
        <title>From a consortium sequence to a unified sequence: the Bacillus subtilis 168 reference genome a decade later.</title>
        <authorList>
            <person name="Barbe V."/>
            <person name="Cruveiller S."/>
            <person name="Kunst F."/>
            <person name="Lenoble P."/>
            <person name="Meurice G."/>
            <person name="Sekowska A."/>
            <person name="Vallenet D."/>
            <person name="Wang T."/>
            <person name="Moszer I."/>
            <person name="Medigue C."/>
            <person name="Danchin A."/>
        </authorList>
    </citation>
    <scope>SEQUENCE REVISION TO 344</scope>
</reference>
<reference key="4">
    <citation type="journal article" date="1997" name="Electrophoresis">
        <title>First steps from a two-dimensional protein index towards a response-regulation map for Bacillus subtilis.</title>
        <authorList>
            <person name="Antelmann H."/>
            <person name="Bernhardt J."/>
            <person name="Schmid R."/>
            <person name="Mach H."/>
            <person name="Voelker U."/>
            <person name="Hecker M."/>
        </authorList>
    </citation>
    <scope>PROTEIN SEQUENCE OF 1-15</scope>
    <source>
        <strain>168 / IS58</strain>
    </source>
</reference>
<feature type="chain" id="PRO_0000068110" description="Glucose-6-phosphate 1-dehydrogenase">
    <location>
        <begin position="1"/>
        <end position="489"/>
    </location>
</feature>
<feature type="active site" description="Proton acceptor" evidence="1">
    <location>
        <position position="241"/>
    </location>
</feature>
<feature type="binding site" evidence="1">
    <location>
        <begin position="15"/>
        <end position="22"/>
    </location>
    <ligand>
        <name>NADP(+)</name>
        <dbReference type="ChEBI" id="CHEBI:58349"/>
    </ligand>
</feature>
<feature type="binding site" evidence="1">
    <location>
        <position position="49"/>
    </location>
    <ligand>
        <name>NADP(+)</name>
        <dbReference type="ChEBI" id="CHEBI:58349"/>
    </ligand>
</feature>
<feature type="binding site" evidence="1">
    <location>
        <begin position="86"/>
        <end position="87"/>
    </location>
    <ligand>
        <name>NADP(+)</name>
        <dbReference type="ChEBI" id="CHEBI:58349"/>
    </ligand>
</feature>
<feature type="binding site" evidence="1">
    <location>
        <position position="149"/>
    </location>
    <ligand>
        <name>NADP(+)</name>
        <dbReference type="ChEBI" id="CHEBI:58349"/>
    </ligand>
</feature>
<feature type="binding site" evidence="1">
    <location>
        <position position="179"/>
    </location>
    <ligand>
        <name>substrate</name>
    </ligand>
</feature>
<feature type="binding site" evidence="1">
    <location>
        <position position="183"/>
    </location>
    <ligand>
        <name>substrate</name>
    </ligand>
</feature>
<feature type="binding site" evidence="1">
    <location>
        <position position="217"/>
    </location>
    <ligand>
        <name>substrate</name>
    </ligand>
</feature>
<feature type="binding site" evidence="1">
    <location>
        <position position="236"/>
    </location>
    <ligand>
        <name>substrate</name>
    </ligand>
</feature>
<feature type="binding site" evidence="1">
    <location>
        <position position="341"/>
    </location>
    <ligand>
        <name>substrate</name>
    </ligand>
</feature>
<feature type="binding site" evidence="1">
    <location>
        <position position="346"/>
    </location>
    <ligand>
        <name>substrate</name>
    </ligand>
</feature>
<feature type="sequence conflict" description="In Ref. 1; BAA12616." evidence="2" ref="1">
    <original>K</original>
    <variation>R</variation>
    <location>
        <position position="344"/>
    </location>
</feature>
<keyword id="KW-0119">Carbohydrate metabolism</keyword>
<keyword id="KW-0903">Direct protein sequencing</keyword>
<keyword id="KW-0313">Glucose metabolism</keyword>
<keyword id="KW-0521">NADP</keyword>
<keyword id="KW-0560">Oxidoreductase</keyword>
<keyword id="KW-1185">Reference proteome</keyword>
<sequence length="489" mass="55632">MKTNQQPKAVIVIFGATGDLAKRKLYPSIHRLYQNGQIGEEFAVVGVGRRPWSNEDLRQTVKTSISSSADKHIDDFTSHFYYHPFDVTNPGSYQELNVLLNQLEDTYQIPNNRMFYLAMAPEFFGTIAKTLKSEGVTATTGWSRLVIEKPFGHDLPSAQALNKEIREAFTEDQIYRIDHYLGKQMVQNIEVIRFANAIFEPLWTNRYISNIQITSSESLGVEDRARYYEKSGALRDMVQNHIMQMVALLAMEPPIKLNTEEIRSEKVKVLRALRPIAKDEVDEYFVRGQYHAGEIDGVPVPAYTDEDNVAPDSNTETFVAGKLLIDNFRWAGVPFYIRTGKRMKEKSTKIVVQFKDIPMNLYYGNENNMNPNLLVIHIQPDEGITLYLNAKKLGGAAHAQPIKLDYCSNCNDELNTPEAYEKLIHDCLLGDATNFAHWDEVALSWSFVDSISETWAANKTLSPNYESGSMGPKESDDLLVKDGLHWWNI</sequence>
<comment type="function">
    <text evidence="1">Catalyzes the oxidation of glucose 6-phosphate to 6-phosphogluconolactone.</text>
</comment>
<comment type="catalytic activity">
    <reaction evidence="1">
        <text>D-glucose 6-phosphate + NADP(+) = 6-phospho-D-glucono-1,5-lactone + NADPH + H(+)</text>
        <dbReference type="Rhea" id="RHEA:15841"/>
        <dbReference type="ChEBI" id="CHEBI:15378"/>
        <dbReference type="ChEBI" id="CHEBI:57783"/>
        <dbReference type="ChEBI" id="CHEBI:57955"/>
        <dbReference type="ChEBI" id="CHEBI:58349"/>
        <dbReference type="ChEBI" id="CHEBI:61548"/>
        <dbReference type="EC" id="1.1.1.49"/>
    </reaction>
</comment>
<comment type="pathway">
    <text evidence="1">Carbohydrate degradation; pentose phosphate pathway; D-ribulose 5-phosphate from D-glucose 6-phosphate (oxidative stage): step 1/3.</text>
</comment>
<comment type="similarity">
    <text evidence="1">Belongs to the glucose-6-phosphate dehydrogenase family.</text>
</comment>
<dbReference type="EC" id="1.1.1.49" evidence="1"/>
<dbReference type="EMBL" id="D84432">
    <property type="protein sequence ID" value="BAA12616.1"/>
    <property type="molecule type" value="Genomic_DNA"/>
</dbReference>
<dbReference type="EMBL" id="AL009126">
    <property type="protein sequence ID" value="CAB14317.2"/>
    <property type="molecule type" value="Genomic_DNA"/>
</dbReference>
<dbReference type="PIR" id="B69964">
    <property type="entry name" value="B69964"/>
</dbReference>
<dbReference type="RefSeq" id="NP_390266.2">
    <property type="nucleotide sequence ID" value="NC_000964.3"/>
</dbReference>
<dbReference type="RefSeq" id="WP_003246151.1">
    <property type="nucleotide sequence ID" value="NZ_OZ025638.1"/>
</dbReference>
<dbReference type="SMR" id="P54547"/>
<dbReference type="FunCoup" id="P54547">
    <property type="interactions" value="440"/>
</dbReference>
<dbReference type="IntAct" id="P54547">
    <property type="interactions" value="1"/>
</dbReference>
<dbReference type="MINT" id="P54547"/>
<dbReference type="STRING" id="224308.BSU23850"/>
<dbReference type="jPOST" id="P54547"/>
<dbReference type="PaxDb" id="224308-BSU23850"/>
<dbReference type="EnsemblBacteria" id="CAB14317">
    <property type="protein sequence ID" value="CAB14317"/>
    <property type="gene ID" value="BSU_23850"/>
</dbReference>
<dbReference type="GeneID" id="938690"/>
<dbReference type="KEGG" id="bsu:BSU23850"/>
<dbReference type="PATRIC" id="fig|224308.179.peg.2598"/>
<dbReference type="eggNOG" id="COG0364">
    <property type="taxonomic scope" value="Bacteria"/>
</dbReference>
<dbReference type="InParanoid" id="P54547"/>
<dbReference type="OrthoDB" id="9802739at2"/>
<dbReference type="PhylomeDB" id="P54547"/>
<dbReference type="BioCyc" id="BSUB:BSU23850-MONOMER"/>
<dbReference type="UniPathway" id="UPA00115">
    <property type="reaction ID" value="UER00408"/>
</dbReference>
<dbReference type="Proteomes" id="UP000001570">
    <property type="component" value="Chromosome"/>
</dbReference>
<dbReference type="GO" id="GO:0005829">
    <property type="term" value="C:cytosol"/>
    <property type="evidence" value="ECO:0000318"/>
    <property type="project" value="GO_Central"/>
</dbReference>
<dbReference type="GO" id="GO:0004345">
    <property type="term" value="F:glucose-6-phosphate dehydrogenase activity"/>
    <property type="evidence" value="ECO:0000318"/>
    <property type="project" value="GO_Central"/>
</dbReference>
<dbReference type="GO" id="GO:0050661">
    <property type="term" value="F:NADP binding"/>
    <property type="evidence" value="ECO:0007669"/>
    <property type="project" value="UniProtKB-UniRule"/>
</dbReference>
<dbReference type="GO" id="GO:0006006">
    <property type="term" value="P:glucose metabolic process"/>
    <property type="evidence" value="ECO:0000318"/>
    <property type="project" value="GO_Central"/>
</dbReference>
<dbReference type="GO" id="GO:0009051">
    <property type="term" value="P:pentose-phosphate shunt, oxidative branch"/>
    <property type="evidence" value="ECO:0000318"/>
    <property type="project" value="GO_Central"/>
</dbReference>
<dbReference type="Gene3D" id="3.30.360.10">
    <property type="entry name" value="Dihydrodipicolinate Reductase, domain 2"/>
    <property type="match status" value="1"/>
</dbReference>
<dbReference type="Gene3D" id="3.40.50.720">
    <property type="entry name" value="NAD(P)-binding Rossmann-like Domain"/>
    <property type="match status" value="1"/>
</dbReference>
<dbReference type="HAMAP" id="MF_00966">
    <property type="entry name" value="G6PD"/>
    <property type="match status" value="1"/>
</dbReference>
<dbReference type="InterPro" id="IPR001282">
    <property type="entry name" value="G6P_DH"/>
</dbReference>
<dbReference type="InterPro" id="IPR019796">
    <property type="entry name" value="G6P_DH_AS"/>
</dbReference>
<dbReference type="InterPro" id="IPR022675">
    <property type="entry name" value="G6P_DH_C"/>
</dbReference>
<dbReference type="InterPro" id="IPR022674">
    <property type="entry name" value="G6P_DH_NAD-bd"/>
</dbReference>
<dbReference type="InterPro" id="IPR036291">
    <property type="entry name" value="NAD(P)-bd_dom_sf"/>
</dbReference>
<dbReference type="NCBIfam" id="NF009492">
    <property type="entry name" value="PRK12853.1-3"/>
    <property type="match status" value="1"/>
</dbReference>
<dbReference type="NCBIfam" id="TIGR00871">
    <property type="entry name" value="zwf"/>
    <property type="match status" value="1"/>
</dbReference>
<dbReference type="PANTHER" id="PTHR23429:SF0">
    <property type="entry name" value="GLUCOSE-6-PHOSPHATE 1-DEHYDROGENASE"/>
    <property type="match status" value="1"/>
</dbReference>
<dbReference type="PANTHER" id="PTHR23429">
    <property type="entry name" value="GLUCOSE-6-PHOSPHATE 1-DEHYDROGENASE G6PD"/>
    <property type="match status" value="1"/>
</dbReference>
<dbReference type="Pfam" id="PF02781">
    <property type="entry name" value="G6PD_C"/>
    <property type="match status" value="1"/>
</dbReference>
<dbReference type="Pfam" id="PF00479">
    <property type="entry name" value="G6PD_N"/>
    <property type="match status" value="1"/>
</dbReference>
<dbReference type="PIRSF" id="PIRSF000110">
    <property type="entry name" value="G6PD"/>
    <property type="match status" value="1"/>
</dbReference>
<dbReference type="PRINTS" id="PR00079">
    <property type="entry name" value="G6PDHDRGNASE"/>
</dbReference>
<dbReference type="SUPFAM" id="SSF55347">
    <property type="entry name" value="Glyceraldehyde-3-phosphate dehydrogenase-like, C-terminal domain"/>
    <property type="match status" value="1"/>
</dbReference>
<dbReference type="SUPFAM" id="SSF51735">
    <property type="entry name" value="NAD(P)-binding Rossmann-fold domains"/>
    <property type="match status" value="1"/>
</dbReference>
<dbReference type="PROSITE" id="PS00069">
    <property type="entry name" value="G6P_DEHYDROGENASE"/>
    <property type="match status" value="1"/>
</dbReference>
<evidence type="ECO:0000255" key="1">
    <source>
        <dbReference type="HAMAP-Rule" id="MF_00966"/>
    </source>
</evidence>
<evidence type="ECO:0000305" key="2"/>
<name>G6PD_BACSU</name>
<organism>
    <name type="scientific">Bacillus subtilis (strain 168)</name>
    <dbReference type="NCBI Taxonomy" id="224308"/>
    <lineage>
        <taxon>Bacteria</taxon>
        <taxon>Bacillati</taxon>
        <taxon>Bacillota</taxon>
        <taxon>Bacilli</taxon>
        <taxon>Bacillales</taxon>
        <taxon>Bacillaceae</taxon>
        <taxon>Bacillus</taxon>
    </lineage>
</organism>
<accession>P54547</accession>